<dbReference type="EMBL" id="EU189132">
    <property type="protein sequence ID" value="ABW83693.1"/>
    <property type="molecule type" value="Genomic_DNA"/>
</dbReference>
<dbReference type="RefSeq" id="YP_001542529.1">
    <property type="nucleotide sequence ID" value="NC_009963.1"/>
</dbReference>
<dbReference type="SMR" id="A8W3C2"/>
<dbReference type="GeneID" id="5729642"/>
<dbReference type="GO" id="GO:0009536">
    <property type="term" value="C:plastid"/>
    <property type="evidence" value="ECO:0007669"/>
    <property type="project" value="UniProtKB-SubCell"/>
</dbReference>
<dbReference type="GO" id="GO:0015935">
    <property type="term" value="C:small ribosomal subunit"/>
    <property type="evidence" value="ECO:0007669"/>
    <property type="project" value="TreeGrafter"/>
</dbReference>
<dbReference type="GO" id="GO:0019843">
    <property type="term" value="F:rRNA binding"/>
    <property type="evidence" value="ECO:0007669"/>
    <property type="project" value="UniProtKB-KW"/>
</dbReference>
<dbReference type="GO" id="GO:0003735">
    <property type="term" value="F:structural constituent of ribosome"/>
    <property type="evidence" value="ECO:0007669"/>
    <property type="project" value="InterPro"/>
</dbReference>
<dbReference type="GO" id="GO:0006412">
    <property type="term" value="P:translation"/>
    <property type="evidence" value="ECO:0007669"/>
    <property type="project" value="InterPro"/>
</dbReference>
<dbReference type="FunFam" id="1.10.287.1480:FF:000001">
    <property type="entry name" value="30S ribosomal protein S14"/>
    <property type="match status" value="1"/>
</dbReference>
<dbReference type="Gene3D" id="1.10.287.1480">
    <property type="match status" value="1"/>
</dbReference>
<dbReference type="HAMAP" id="MF_00537">
    <property type="entry name" value="Ribosomal_uS14_1"/>
    <property type="match status" value="1"/>
</dbReference>
<dbReference type="InterPro" id="IPR001209">
    <property type="entry name" value="Ribosomal_uS14"/>
</dbReference>
<dbReference type="InterPro" id="IPR023036">
    <property type="entry name" value="Ribosomal_uS14_bac/plastid"/>
</dbReference>
<dbReference type="InterPro" id="IPR018271">
    <property type="entry name" value="Ribosomal_uS14_CS"/>
</dbReference>
<dbReference type="NCBIfam" id="NF006477">
    <property type="entry name" value="PRK08881.1"/>
    <property type="match status" value="1"/>
</dbReference>
<dbReference type="PANTHER" id="PTHR19836">
    <property type="entry name" value="30S RIBOSOMAL PROTEIN S14"/>
    <property type="match status" value="1"/>
</dbReference>
<dbReference type="PANTHER" id="PTHR19836:SF19">
    <property type="entry name" value="SMALL RIBOSOMAL SUBUNIT PROTEIN US14M"/>
    <property type="match status" value="1"/>
</dbReference>
<dbReference type="Pfam" id="PF00253">
    <property type="entry name" value="Ribosomal_S14"/>
    <property type="match status" value="1"/>
</dbReference>
<dbReference type="SUPFAM" id="SSF57716">
    <property type="entry name" value="Glucocorticoid receptor-like (DNA-binding domain)"/>
    <property type="match status" value="1"/>
</dbReference>
<dbReference type="PROSITE" id="PS00527">
    <property type="entry name" value="RIBOSOMAL_S14"/>
    <property type="match status" value="1"/>
</dbReference>
<protein>
    <recommendedName>
        <fullName evidence="1">Small ribosomal subunit protein uS14c</fullName>
    </recommendedName>
    <alternativeName>
        <fullName evidence="2">30S ribosomal protein S14, plastid</fullName>
    </alternativeName>
</protein>
<feature type="chain" id="PRO_0000354411" description="Small ribosomal subunit protein uS14c">
    <location>
        <begin position="1"/>
        <end position="100"/>
    </location>
</feature>
<proteinExistence type="inferred from homology"/>
<gene>
    <name evidence="1" type="primary">rps14</name>
</gene>
<reference key="1">
    <citation type="journal article" date="2007" name="BMC Plant Biol.">
        <title>Complete plastid genome sequences suggest strong selection for retention of photosynthetic genes in the parasitic plant genus Cuscuta.</title>
        <authorList>
            <person name="McNeal J.R."/>
            <person name="Kuehl J.V."/>
            <person name="Boore J.L."/>
            <person name="dePamphilis C.W."/>
        </authorList>
    </citation>
    <scope>NUCLEOTIDE SEQUENCE [LARGE SCALE GENOMIC DNA]</scope>
</reference>
<accession>A8W3C2</accession>
<evidence type="ECO:0000255" key="1">
    <source>
        <dbReference type="HAMAP-Rule" id="MF_00537"/>
    </source>
</evidence>
<evidence type="ECO:0000305" key="2"/>
<geneLocation type="plastid"/>
<sequence length="100" mass="11841">MARKSLIQRNKKRQKLELKYHWIRGSSKKEIHRVPLLSDKWEIYVKLQSSPRNSAPTRLHRRCFLTGRPRANYRDFGLSGHILREMVQACLLPGATRSSW</sequence>
<keyword id="KW-0934">Plastid</keyword>
<keyword id="KW-0687">Ribonucleoprotein</keyword>
<keyword id="KW-0689">Ribosomal protein</keyword>
<keyword id="KW-0694">RNA-binding</keyword>
<keyword id="KW-0699">rRNA-binding</keyword>
<name>RR14_CUSEX</name>
<comment type="function">
    <text evidence="1">Binds 16S rRNA, required for the assembly of 30S particles.</text>
</comment>
<comment type="subunit">
    <text evidence="1">Part of the 30S ribosomal subunit.</text>
</comment>
<comment type="subcellular location">
    <subcellularLocation>
        <location>Plastid</location>
    </subcellularLocation>
</comment>
<comment type="similarity">
    <text evidence="1">Belongs to the universal ribosomal protein uS14 family.</text>
</comment>
<comment type="caution">
    <text evidence="2">Young tissue from this organism is photosynthetic and contains some thylakoids, although the photosynthetic activity does not exceed the light compensation point.</text>
</comment>
<organism>
    <name type="scientific">Cuscuta exaltata</name>
    <name type="common">Tall dodder</name>
    <dbReference type="NCBI Taxonomy" id="476139"/>
    <lineage>
        <taxon>Eukaryota</taxon>
        <taxon>Viridiplantae</taxon>
        <taxon>Streptophyta</taxon>
        <taxon>Embryophyta</taxon>
        <taxon>Tracheophyta</taxon>
        <taxon>Spermatophyta</taxon>
        <taxon>Magnoliopsida</taxon>
        <taxon>eudicotyledons</taxon>
        <taxon>Gunneridae</taxon>
        <taxon>Pentapetalae</taxon>
        <taxon>asterids</taxon>
        <taxon>lamiids</taxon>
        <taxon>Solanales</taxon>
        <taxon>Convolvulaceae</taxon>
        <taxon>Cuscuteae</taxon>
        <taxon>Cuscuta</taxon>
        <taxon>Cuscuta subgen. Monogynella</taxon>
    </lineage>
</organism>